<protein>
    <recommendedName>
        <fullName>Peripherin-2</fullName>
    </recommendedName>
    <alternativeName>
        <fullName>CRDS1</fullName>
    </alternativeName>
    <alternativeName>
        <fullName>Photoreceptor outer segment membrane glycoprotein 1</fullName>
    </alternativeName>
    <alternativeName>
        <fullName>Retinal degeneration slow protein</fullName>
    </alternativeName>
</protein>
<comment type="function">
    <text evidence="2">May be involved in the morphogenesis of retina outer segment disks and the development and maintenance of the retina ultrastructure.</text>
</comment>
<comment type="subunit">
    <text evidence="1">Homodimer; disulfide-linked.</text>
</comment>
<comment type="subcellular location">
    <subcellularLocation>
        <location evidence="3">Membrane</location>
        <topology evidence="4">Multi-pass membrane protein</topology>
    </subcellularLocation>
</comment>
<comment type="similarity">
    <text evidence="6">Belongs to the PRPH2/ROM1 family.</text>
</comment>
<name>PRPH2_CHICK</name>
<organism>
    <name type="scientific">Gallus gallus</name>
    <name type="common">Chicken</name>
    <dbReference type="NCBI Taxonomy" id="9031"/>
    <lineage>
        <taxon>Eukaryota</taxon>
        <taxon>Metazoa</taxon>
        <taxon>Chordata</taxon>
        <taxon>Craniata</taxon>
        <taxon>Vertebrata</taxon>
        <taxon>Euteleostomi</taxon>
        <taxon>Archelosauria</taxon>
        <taxon>Archosauria</taxon>
        <taxon>Dinosauria</taxon>
        <taxon>Saurischia</taxon>
        <taxon>Theropoda</taxon>
        <taxon>Coelurosauria</taxon>
        <taxon>Aves</taxon>
        <taxon>Neognathae</taxon>
        <taxon>Galloanserae</taxon>
        <taxon>Galliformes</taxon>
        <taxon>Phasianidae</taxon>
        <taxon>Phasianinae</taxon>
        <taxon>Gallus</taxon>
    </lineage>
</organism>
<reference key="1">
    <citation type="journal article" date="1998" name="Invest. Ophthalmol. Vis. Sci.">
        <title>Identification of two rds/peripherin homologs in the chick retina.</title>
        <authorList>
            <person name="Weng J."/>
            <person name="Belecky-Adams T."/>
            <person name="Adler R."/>
            <person name="Travis G.H."/>
        </authorList>
    </citation>
    <scope>NUCLEOTIDE SEQUENCE [MRNA]</scope>
    <source>
        <tissue>Retina</tissue>
    </source>
</reference>
<gene>
    <name type="primary">PRPH2</name>
    <name type="synonym">RDS</name>
</gene>
<sequence length="354" mass="40208">MALLKVKFNQKKRVKLAQGLWLMNWFSVFAGIIVFSMGLFLKIELRKRSEVMDNSESHFVPNSLILMGILSCAFNGFAGKICYDSLDPAKFAKWKPLLKPYLALCFFFNILLFFVALICFLMRGSLESTLAQGLKNSMKFYRDTDTPGRCFMKKTIDMLQIEFKCCGNNGFKDWFEIQWISNRYLDFSSKEVKDRIKSNVDGRYLVDGVPFSCCNPSSPRPCIQYQVTNNSAHYSYDYQTEELNLWGRGCREALLHYYSSMMSSMGAVVLLVWLFEMSVMVGLRLLHTSLESIANPEDPECESEGWILENSLKDTLKSALESLKKIGKFNQVEAGAEGAEGEEAGKTPAITTVS</sequence>
<evidence type="ECO:0000250" key="1"/>
<evidence type="ECO:0000250" key="2">
    <source>
        <dbReference type="UniProtKB" id="P15499"/>
    </source>
</evidence>
<evidence type="ECO:0000250" key="3">
    <source>
        <dbReference type="UniProtKB" id="P17810"/>
    </source>
</evidence>
<evidence type="ECO:0000255" key="4"/>
<evidence type="ECO:0000256" key="5">
    <source>
        <dbReference type="SAM" id="MobiDB-lite"/>
    </source>
</evidence>
<evidence type="ECO:0000305" key="6"/>
<keyword id="KW-0130">Cell adhesion</keyword>
<keyword id="KW-1015">Disulfide bond</keyword>
<keyword id="KW-0325">Glycoprotein</keyword>
<keyword id="KW-0472">Membrane</keyword>
<keyword id="KW-1185">Reference proteome</keyword>
<keyword id="KW-0812">Transmembrane</keyword>
<keyword id="KW-1133">Transmembrane helix</keyword>
<accession>O42281</accession>
<dbReference type="EMBL" id="AF031238">
    <property type="protein sequence ID" value="AAC06274.1"/>
    <property type="molecule type" value="mRNA"/>
</dbReference>
<dbReference type="RefSeq" id="NP_990369.1">
    <property type="nucleotide sequence ID" value="NM_205038.1"/>
</dbReference>
<dbReference type="SMR" id="O42281"/>
<dbReference type="FunCoup" id="O42281">
    <property type="interactions" value="26"/>
</dbReference>
<dbReference type="STRING" id="9031.ENSGALP00000016098"/>
<dbReference type="GlyCosmos" id="O42281">
    <property type="glycosylation" value="1 site, No reported glycans"/>
</dbReference>
<dbReference type="GlyGen" id="O42281">
    <property type="glycosylation" value="1 site"/>
</dbReference>
<dbReference type="PaxDb" id="9031-ENSGALP00000016098"/>
<dbReference type="Ensembl" id="ENSGALT00010044853.1">
    <property type="protein sequence ID" value="ENSGALP00010026775.1"/>
    <property type="gene ID" value="ENSGALG00010018541.1"/>
</dbReference>
<dbReference type="GeneID" id="395899"/>
<dbReference type="KEGG" id="gga:395899"/>
<dbReference type="CTD" id="5961"/>
<dbReference type="VEuPathDB" id="HostDB:geneid_395899"/>
<dbReference type="eggNOG" id="KOG3882">
    <property type="taxonomic scope" value="Eukaryota"/>
</dbReference>
<dbReference type="GeneTree" id="ENSGT00940000157303"/>
<dbReference type="HOGENOM" id="CLU_068903_0_0_1"/>
<dbReference type="InParanoid" id="O42281"/>
<dbReference type="OMA" id="LCCFLMR"/>
<dbReference type="OrthoDB" id="9836210at2759"/>
<dbReference type="PhylomeDB" id="O42281"/>
<dbReference type="TreeFam" id="TF331684"/>
<dbReference type="PRO" id="PR:O42281"/>
<dbReference type="Proteomes" id="UP000000539">
    <property type="component" value="Chromosome 3"/>
</dbReference>
<dbReference type="Bgee" id="ENSGALG00000009909">
    <property type="expression patterns" value="Expressed in spermatid and 1 other cell type or tissue"/>
</dbReference>
<dbReference type="GO" id="GO:0001750">
    <property type="term" value="C:photoreceptor outer segment"/>
    <property type="evidence" value="ECO:0007669"/>
    <property type="project" value="Ensembl"/>
</dbReference>
<dbReference type="GO" id="GO:0005886">
    <property type="term" value="C:plasma membrane"/>
    <property type="evidence" value="ECO:0000318"/>
    <property type="project" value="GO_Central"/>
</dbReference>
<dbReference type="GO" id="GO:0042803">
    <property type="term" value="F:protein homodimerization activity"/>
    <property type="evidence" value="ECO:0007669"/>
    <property type="project" value="Ensembl"/>
</dbReference>
<dbReference type="GO" id="GO:0007155">
    <property type="term" value="P:cell adhesion"/>
    <property type="evidence" value="ECO:0007669"/>
    <property type="project" value="UniProtKB-KW"/>
</dbReference>
<dbReference type="GO" id="GO:0050908">
    <property type="term" value="P:detection of light stimulus involved in visual perception"/>
    <property type="evidence" value="ECO:0007669"/>
    <property type="project" value="Ensembl"/>
</dbReference>
<dbReference type="GO" id="GO:0035845">
    <property type="term" value="P:photoreceptor cell outer segment organization"/>
    <property type="evidence" value="ECO:0007669"/>
    <property type="project" value="Ensembl"/>
</dbReference>
<dbReference type="GO" id="GO:0051291">
    <property type="term" value="P:protein heterooligomerization"/>
    <property type="evidence" value="ECO:0007669"/>
    <property type="project" value="Ensembl"/>
</dbReference>
<dbReference type="GO" id="GO:0051260">
    <property type="term" value="P:protein homooligomerization"/>
    <property type="evidence" value="ECO:0007669"/>
    <property type="project" value="Ensembl"/>
</dbReference>
<dbReference type="GO" id="GO:0072659">
    <property type="term" value="P:protein localization to plasma membrane"/>
    <property type="evidence" value="ECO:0000318"/>
    <property type="project" value="GO_Central"/>
</dbReference>
<dbReference type="GO" id="GO:0051604">
    <property type="term" value="P:protein maturation"/>
    <property type="evidence" value="ECO:0000318"/>
    <property type="project" value="GO_Central"/>
</dbReference>
<dbReference type="GO" id="GO:0060041">
    <property type="term" value="P:retina development in camera-type eye"/>
    <property type="evidence" value="ECO:0000250"/>
    <property type="project" value="UniProtKB"/>
</dbReference>
<dbReference type="CDD" id="cd03162">
    <property type="entry name" value="peripherin_like_LEL"/>
    <property type="match status" value="1"/>
</dbReference>
<dbReference type="FunFam" id="1.10.1450.10:FF:000002">
    <property type="entry name" value="Retinal outer segment membrane protein 1"/>
    <property type="match status" value="1"/>
</dbReference>
<dbReference type="Gene3D" id="1.10.1450.10">
    <property type="entry name" value="Tetraspanin"/>
    <property type="match status" value="1"/>
</dbReference>
<dbReference type="InterPro" id="IPR000830">
    <property type="entry name" value="Peripherin/rom-1"/>
</dbReference>
<dbReference type="InterPro" id="IPR018498">
    <property type="entry name" value="Peripherin/rom-1_CS"/>
</dbReference>
<dbReference type="InterPro" id="IPR042026">
    <property type="entry name" value="Peripherin_LEL"/>
</dbReference>
<dbReference type="InterPro" id="IPR018499">
    <property type="entry name" value="Tetraspanin/Peripherin"/>
</dbReference>
<dbReference type="InterPro" id="IPR008952">
    <property type="entry name" value="Tetraspanin_EC2_sf"/>
</dbReference>
<dbReference type="PANTHER" id="PTHR19282:SF202">
    <property type="entry name" value="PERIPHERIN-2"/>
    <property type="match status" value="1"/>
</dbReference>
<dbReference type="PANTHER" id="PTHR19282">
    <property type="entry name" value="TETRASPANIN"/>
    <property type="match status" value="1"/>
</dbReference>
<dbReference type="Pfam" id="PF00335">
    <property type="entry name" value="Tetraspanin"/>
    <property type="match status" value="1"/>
</dbReference>
<dbReference type="PRINTS" id="PR00218">
    <property type="entry name" value="PERIPHERNRDS"/>
</dbReference>
<dbReference type="SUPFAM" id="SSF48652">
    <property type="entry name" value="Tetraspanin"/>
    <property type="match status" value="1"/>
</dbReference>
<dbReference type="PROSITE" id="PS00930">
    <property type="entry name" value="RDS_ROM1"/>
    <property type="match status" value="1"/>
</dbReference>
<proteinExistence type="evidence at transcript level"/>
<feature type="chain" id="PRO_0000168108" description="Peripherin-2">
    <location>
        <begin position="1"/>
        <end position="354"/>
    </location>
</feature>
<feature type="topological domain" description="Cytoplasmic" evidence="4">
    <location>
        <begin position="1"/>
        <end position="24"/>
    </location>
</feature>
<feature type="transmembrane region" description="Helical" evidence="4">
    <location>
        <begin position="25"/>
        <end position="43"/>
    </location>
</feature>
<feature type="topological domain" description="Lumenal" evidence="4">
    <location>
        <begin position="44"/>
        <end position="61"/>
    </location>
</feature>
<feature type="transmembrane region" description="Helical" evidence="4">
    <location>
        <begin position="62"/>
        <end position="80"/>
    </location>
</feature>
<feature type="topological domain" description="Cytoplasmic" evidence="4">
    <location>
        <begin position="81"/>
        <end position="99"/>
    </location>
</feature>
<feature type="transmembrane region" description="Helical" evidence="4">
    <location>
        <begin position="100"/>
        <end position="123"/>
    </location>
</feature>
<feature type="topological domain" description="Lumenal" evidence="4">
    <location>
        <begin position="124"/>
        <end position="264"/>
    </location>
</feature>
<feature type="transmembrane region" description="Helical" evidence="4">
    <location>
        <begin position="265"/>
        <end position="290"/>
    </location>
</feature>
<feature type="topological domain" description="Cytoplasmic" evidence="4">
    <location>
        <begin position="291"/>
        <end position="354"/>
    </location>
</feature>
<feature type="region of interest" description="Disordered" evidence="5">
    <location>
        <begin position="335"/>
        <end position="354"/>
    </location>
</feature>
<feature type="glycosylation site" description="N-linked (GlcNAc...) asparagine" evidence="4">
    <location>
        <position position="229"/>
    </location>
</feature>